<name>RL32_STRPN</name>
<accession>Q97NB7</accession>
<organism>
    <name type="scientific">Streptococcus pneumoniae serotype 4 (strain ATCC BAA-334 / TIGR4)</name>
    <dbReference type="NCBI Taxonomy" id="170187"/>
    <lineage>
        <taxon>Bacteria</taxon>
        <taxon>Bacillati</taxon>
        <taxon>Bacillota</taxon>
        <taxon>Bacilli</taxon>
        <taxon>Lactobacillales</taxon>
        <taxon>Streptococcaceae</taxon>
        <taxon>Streptococcus</taxon>
    </lineage>
</organism>
<reference key="1">
    <citation type="journal article" date="2001" name="Science">
        <title>Complete genome sequence of a virulent isolate of Streptococcus pneumoniae.</title>
        <authorList>
            <person name="Tettelin H."/>
            <person name="Nelson K.E."/>
            <person name="Paulsen I.T."/>
            <person name="Eisen J.A."/>
            <person name="Read T.D."/>
            <person name="Peterson S.N."/>
            <person name="Heidelberg J.F."/>
            <person name="DeBoy R.T."/>
            <person name="Haft D.H."/>
            <person name="Dodson R.J."/>
            <person name="Durkin A.S."/>
            <person name="Gwinn M.L."/>
            <person name="Kolonay J.F."/>
            <person name="Nelson W.C."/>
            <person name="Peterson J.D."/>
            <person name="Umayam L.A."/>
            <person name="White O."/>
            <person name="Salzberg S.L."/>
            <person name="Lewis M.R."/>
            <person name="Radune D."/>
            <person name="Holtzapple E.K."/>
            <person name="Khouri H.M."/>
            <person name="Wolf A.M."/>
            <person name="Utterback T.R."/>
            <person name="Hansen C.L."/>
            <person name="McDonald L.A."/>
            <person name="Feldblyum T.V."/>
            <person name="Angiuoli S.V."/>
            <person name="Dickinson T."/>
            <person name="Hickey E.K."/>
            <person name="Holt I.E."/>
            <person name="Loftus B.J."/>
            <person name="Yang F."/>
            <person name="Smith H.O."/>
            <person name="Venter J.C."/>
            <person name="Dougherty B.A."/>
            <person name="Morrison D.A."/>
            <person name="Hollingshead S.K."/>
            <person name="Fraser C.M."/>
        </authorList>
    </citation>
    <scope>NUCLEOTIDE SEQUENCE [LARGE SCALE GENOMIC DNA]</scope>
    <source>
        <strain>ATCC BAA-334 / TIGR4</strain>
    </source>
</reference>
<evidence type="ECO:0000255" key="1">
    <source>
        <dbReference type="HAMAP-Rule" id="MF_00340"/>
    </source>
</evidence>
<evidence type="ECO:0000305" key="2"/>
<proteinExistence type="inferred from homology"/>
<keyword id="KW-1185">Reference proteome</keyword>
<keyword id="KW-0687">Ribonucleoprotein</keyword>
<keyword id="KW-0689">Ribosomal protein</keyword>
<gene>
    <name evidence="1" type="primary">rpmF</name>
    <name type="ordered locus">SP_2134</name>
</gene>
<dbReference type="EMBL" id="AE005672">
    <property type="protein sequence ID" value="AAK76192.1"/>
    <property type="molecule type" value="Genomic_DNA"/>
</dbReference>
<dbReference type="PIR" id="G95249">
    <property type="entry name" value="G95249"/>
</dbReference>
<dbReference type="RefSeq" id="WP_000290419.1">
    <property type="nucleotide sequence ID" value="NZ_CP155539.1"/>
</dbReference>
<dbReference type="SMR" id="Q97NB7"/>
<dbReference type="PaxDb" id="170187-SP_2134"/>
<dbReference type="EnsemblBacteria" id="AAK76192">
    <property type="protein sequence ID" value="AAK76192"/>
    <property type="gene ID" value="SP_2134"/>
</dbReference>
<dbReference type="KEGG" id="spn:SP_2134"/>
<dbReference type="eggNOG" id="COG0333">
    <property type="taxonomic scope" value="Bacteria"/>
</dbReference>
<dbReference type="PhylomeDB" id="Q97NB7"/>
<dbReference type="BioCyc" id="SPNE170187:G1FZB-2226-MONOMER"/>
<dbReference type="Proteomes" id="UP000000585">
    <property type="component" value="Chromosome"/>
</dbReference>
<dbReference type="GO" id="GO:0015934">
    <property type="term" value="C:large ribosomal subunit"/>
    <property type="evidence" value="ECO:0007669"/>
    <property type="project" value="InterPro"/>
</dbReference>
<dbReference type="GO" id="GO:0003735">
    <property type="term" value="F:structural constituent of ribosome"/>
    <property type="evidence" value="ECO:0007669"/>
    <property type="project" value="InterPro"/>
</dbReference>
<dbReference type="GO" id="GO:0006412">
    <property type="term" value="P:translation"/>
    <property type="evidence" value="ECO:0007669"/>
    <property type="project" value="UniProtKB-UniRule"/>
</dbReference>
<dbReference type="HAMAP" id="MF_00340">
    <property type="entry name" value="Ribosomal_bL32"/>
    <property type="match status" value="1"/>
</dbReference>
<dbReference type="InterPro" id="IPR002677">
    <property type="entry name" value="Ribosomal_bL32"/>
</dbReference>
<dbReference type="InterPro" id="IPR044957">
    <property type="entry name" value="Ribosomal_bL32_bact"/>
</dbReference>
<dbReference type="InterPro" id="IPR011332">
    <property type="entry name" value="Ribosomal_zn-bd"/>
</dbReference>
<dbReference type="NCBIfam" id="TIGR01031">
    <property type="entry name" value="rpmF_bact"/>
    <property type="match status" value="1"/>
</dbReference>
<dbReference type="PANTHER" id="PTHR35534">
    <property type="entry name" value="50S RIBOSOMAL PROTEIN L32"/>
    <property type="match status" value="1"/>
</dbReference>
<dbReference type="PANTHER" id="PTHR35534:SF1">
    <property type="entry name" value="LARGE RIBOSOMAL SUBUNIT PROTEIN BL32"/>
    <property type="match status" value="1"/>
</dbReference>
<dbReference type="Pfam" id="PF01783">
    <property type="entry name" value="Ribosomal_L32p"/>
    <property type="match status" value="1"/>
</dbReference>
<dbReference type="SUPFAM" id="SSF57829">
    <property type="entry name" value="Zn-binding ribosomal proteins"/>
    <property type="match status" value="1"/>
</dbReference>
<comment type="similarity">
    <text evidence="1">Belongs to the bacterial ribosomal protein bL32 family.</text>
</comment>
<feature type="chain" id="PRO_0000172415" description="Large ribosomal subunit protein bL32">
    <location>
        <begin position="1"/>
        <end position="60"/>
    </location>
</feature>
<protein>
    <recommendedName>
        <fullName evidence="1">Large ribosomal subunit protein bL32</fullName>
    </recommendedName>
    <alternativeName>
        <fullName evidence="2">50S ribosomal protein L32</fullName>
    </alternativeName>
</protein>
<sequence>MAVPARRTSKAKKNKRRTHYKVTAPSVNFDETTGDYSRSHRVSLKGYYKGRKITKAASAE</sequence>